<evidence type="ECO:0000255" key="1">
    <source>
        <dbReference type="HAMAP-Rule" id="MF_00083"/>
    </source>
</evidence>
<name>PTH_ECO24</name>
<accession>A7ZKX7</accession>
<reference key="1">
    <citation type="journal article" date="2008" name="J. Bacteriol.">
        <title>The pangenome structure of Escherichia coli: comparative genomic analysis of E. coli commensal and pathogenic isolates.</title>
        <authorList>
            <person name="Rasko D.A."/>
            <person name="Rosovitz M.J."/>
            <person name="Myers G.S.A."/>
            <person name="Mongodin E.F."/>
            <person name="Fricke W.F."/>
            <person name="Gajer P."/>
            <person name="Crabtree J."/>
            <person name="Sebaihia M."/>
            <person name="Thomson N.R."/>
            <person name="Chaudhuri R."/>
            <person name="Henderson I.R."/>
            <person name="Sperandio V."/>
            <person name="Ravel J."/>
        </authorList>
    </citation>
    <scope>NUCLEOTIDE SEQUENCE [LARGE SCALE GENOMIC DNA]</scope>
    <source>
        <strain>E24377A / ETEC</strain>
    </source>
</reference>
<sequence length="194" mass="21082">MTIKLIVGLANPGAEYAATRHNAGAWFVDLLAERLRAPLREEAKFFGYTSRVTLGGEDVRLLVPTTFMNLSGKAVAAMASFFRINPDEILVAHDELDLPPGVAKFKLGGGHGGHNGLKDIISKLGNNPNFHRLRIGIGHPGDKNKVVGFVLGKPPVSEQKLIDEAIDEAARCTEMWFTDGLTKATNRLHAFKAQ</sequence>
<gene>
    <name evidence="1" type="primary">pth</name>
    <name type="ordered locus">EcE24377A_1351</name>
</gene>
<protein>
    <recommendedName>
        <fullName evidence="1">Peptidyl-tRNA hydrolase</fullName>
        <shortName evidence="1">Pth</shortName>
        <ecNumber evidence="1">3.1.1.29</ecNumber>
    </recommendedName>
</protein>
<dbReference type="EC" id="3.1.1.29" evidence="1"/>
<dbReference type="EMBL" id="CP000800">
    <property type="protein sequence ID" value="ABV18071.1"/>
    <property type="molecule type" value="Genomic_DNA"/>
</dbReference>
<dbReference type="RefSeq" id="WP_000152933.1">
    <property type="nucleotide sequence ID" value="NC_009801.1"/>
</dbReference>
<dbReference type="BMRB" id="A7ZKX7"/>
<dbReference type="SMR" id="A7ZKX7"/>
<dbReference type="GeneID" id="93775269"/>
<dbReference type="KEGG" id="ecw:EcE24377A_1351"/>
<dbReference type="HOGENOM" id="CLU_062456_3_1_6"/>
<dbReference type="Proteomes" id="UP000001122">
    <property type="component" value="Chromosome"/>
</dbReference>
<dbReference type="GO" id="GO:0005737">
    <property type="term" value="C:cytoplasm"/>
    <property type="evidence" value="ECO:0007669"/>
    <property type="project" value="UniProtKB-SubCell"/>
</dbReference>
<dbReference type="GO" id="GO:0004045">
    <property type="term" value="F:peptidyl-tRNA hydrolase activity"/>
    <property type="evidence" value="ECO:0007669"/>
    <property type="project" value="UniProtKB-UniRule"/>
</dbReference>
<dbReference type="GO" id="GO:0000049">
    <property type="term" value="F:tRNA binding"/>
    <property type="evidence" value="ECO:0007669"/>
    <property type="project" value="UniProtKB-UniRule"/>
</dbReference>
<dbReference type="GO" id="GO:0006515">
    <property type="term" value="P:protein quality control for misfolded or incompletely synthesized proteins"/>
    <property type="evidence" value="ECO:0007669"/>
    <property type="project" value="UniProtKB-UniRule"/>
</dbReference>
<dbReference type="GO" id="GO:0072344">
    <property type="term" value="P:rescue of stalled ribosome"/>
    <property type="evidence" value="ECO:0007669"/>
    <property type="project" value="UniProtKB-UniRule"/>
</dbReference>
<dbReference type="CDD" id="cd00462">
    <property type="entry name" value="PTH"/>
    <property type="match status" value="1"/>
</dbReference>
<dbReference type="FunFam" id="3.40.50.1470:FF:000001">
    <property type="entry name" value="Peptidyl-tRNA hydrolase"/>
    <property type="match status" value="1"/>
</dbReference>
<dbReference type="Gene3D" id="3.40.50.1470">
    <property type="entry name" value="Peptidyl-tRNA hydrolase"/>
    <property type="match status" value="1"/>
</dbReference>
<dbReference type="HAMAP" id="MF_00083">
    <property type="entry name" value="Pept_tRNA_hydro_bact"/>
    <property type="match status" value="1"/>
</dbReference>
<dbReference type="InterPro" id="IPR001328">
    <property type="entry name" value="Pept_tRNA_hydro"/>
</dbReference>
<dbReference type="InterPro" id="IPR018171">
    <property type="entry name" value="Pept_tRNA_hydro_CS"/>
</dbReference>
<dbReference type="InterPro" id="IPR036416">
    <property type="entry name" value="Pept_tRNA_hydro_sf"/>
</dbReference>
<dbReference type="NCBIfam" id="TIGR00447">
    <property type="entry name" value="pth"/>
    <property type="match status" value="1"/>
</dbReference>
<dbReference type="PANTHER" id="PTHR17224">
    <property type="entry name" value="PEPTIDYL-TRNA HYDROLASE"/>
    <property type="match status" value="1"/>
</dbReference>
<dbReference type="PANTHER" id="PTHR17224:SF1">
    <property type="entry name" value="PEPTIDYL-TRNA HYDROLASE"/>
    <property type="match status" value="1"/>
</dbReference>
<dbReference type="Pfam" id="PF01195">
    <property type="entry name" value="Pept_tRNA_hydro"/>
    <property type="match status" value="1"/>
</dbReference>
<dbReference type="SUPFAM" id="SSF53178">
    <property type="entry name" value="Peptidyl-tRNA hydrolase-like"/>
    <property type="match status" value="1"/>
</dbReference>
<dbReference type="PROSITE" id="PS01195">
    <property type="entry name" value="PEPT_TRNA_HYDROL_1"/>
    <property type="match status" value="1"/>
</dbReference>
<dbReference type="PROSITE" id="PS01196">
    <property type="entry name" value="PEPT_TRNA_HYDROL_2"/>
    <property type="match status" value="1"/>
</dbReference>
<comment type="function">
    <text evidence="1">Hydrolyzes ribosome-free peptidyl-tRNAs (with 1 or more amino acids incorporated), which drop off the ribosome during protein synthesis, or as a result of ribosome stalling.</text>
</comment>
<comment type="function">
    <text evidence="1">Catalyzes the release of premature peptidyl moieties from peptidyl-tRNA molecules trapped in stalled 50S ribosomal subunits, and thus maintains levels of free tRNAs and 50S ribosomes.</text>
</comment>
<comment type="catalytic activity">
    <reaction evidence="1">
        <text>an N-acyl-L-alpha-aminoacyl-tRNA + H2O = an N-acyl-L-amino acid + a tRNA + H(+)</text>
        <dbReference type="Rhea" id="RHEA:54448"/>
        <dbReference type="Rhea" id="RHEA-COMP:10123"/>
        <dbReference type="Rhea" id="RHEA-COMP:13883"/>
        <dbReference type="ChEBI" id="CHEBI:15377"/>
        <dbReference type="ChEBI" id="CHEBI:15378"/>
        <dbReference type="ChEBI" id="CHEBI:59874"/>
        <dbReference type="ChEBI" id="CHEBI:78442"/>
        <dbReference type="ChEBI" id="CHEBI:138191"/>
        <dbReference type="EC" id="3.1.1.29"/>
    </reaction>
</comment>
<comment type="subunit">
    <text evidence="1">Monomer.</text>
</comment>
<comment type="subcellular location">
    <subcellularLocation>
        <location evidence="1">Cytoplasm</location>
    </subcellularLocation>
</comment>
<comment type="similarity">
    <text evidence="1">Belongs to the PTH family.</text>
</comment>
<feature type="chain" id="PRO_1000057549" description="Peptidyl-tRNA hydrolase">
    <location>
        <begin position="1"/>
        <end position="194"/>
    </location>
</feature>
<feature type="active site" description="Proton acceptor" evidence="1">
    <location>
        <position position="21"/>
    </location>
</feature>
<feature type="binding site" evidence="1">
    <location>
        <position position="16"/>
    </location>
    <ligand>
        <name>tRNA</name>
        <dbReference type="ChEBI" id="CHEBI:17843"/>
    </ligand>
</feature>
<feature type="binding site" evidence="1">
    <location>
        <position position="67"/>
    </location>
    <ligand>
        <name>tRNA</name>
        <dbReference type="ChEBI" id="CHEBI:17843"/>
    </ligand>
</feature>
<feature type="binding site" evidence="1">
    <location>
        <position position="69"/>
    </location>
    <ligand>
        <name>tRNA</name>
        <dbReference type="ChEBI" id="CHEBI:17843"/>
    </ligand>
</feature>
<feature type="binding site" evidence="1">
    <location>
        <position position="115"/>
    </location>
    <ligand>
        <name>tRNA</name>
        <dbReference type="ChEBI" id="CHEBI:17843"/>
    </ligand>
</feature>
<feature type="site" description="Discriminates between blocked and unblocked aminoacyl-tRNA" evidence="1">
    <location>
        <position position="11"/>
    </location>
</feature>
<feature type="site" description="Stabilizes the basic form of H active site to accept a proton" evidence="1">
    <location>
        <position position="94"/>
    </location>
</feature>
<proteinExistence type="inferred from homology"/>
<organism>
    <name type="scientific">Escherichia coli O139:H28 (strain E24377A / ETEC)</name>
    <dbReference type="NCBI Taxonomy" id="331111"/>
    <lineage>
        <taxon>Bacteria</taxon>
        <taxon>Pseudomonadati</taxon>
        <taxon>Pseudomonadota</taxon>
        <taxon>Gammaproteobacteria</taxon>
        <taxon>Enterobacterales</taxon>
        <taxon>Enterobacteriaceae</taxon>
        <taxon>Escherichia</taxon>
    </lineage>
</organism>
<keyword id="KW-0963">Cytoplasm</keyword>
<keyword id="KW-0378">Hydrolase</keyword>
<keyword id="KW-1185">Reference proteome</keyword>
<keyword id="KW-0694">RNA-binding</keyword>
<keyword id="KW-0820">tRNA-binding</keyword>